<gene>
    <name evidence="1" type="primary">nuoD1</name>
    <name type="ordered locus">Bind_2396</name>
</gene>
<organism>
    <name type="scientific">Beijerinckia indica subsp. indica (strain ATCC 9039 / DSM 1715 / NCIMB 8712)</name>
    <dbReference type="NCBI Taxonomy" id="395963"/>
    <lineage>
        <taxon>Bacteria</taxon>
        <taxon>Pseudomonadati</taxon>
        <taxon>Pseudomonadota</taxon>
        <taxon>Alphaproteobacteria</taxon>
        <taxon>Hyphomicrobiales</taxon>
        <taxon>Beijerinckiaceae</taxon>
        <taxon>Beijerinckia</taxon>
    </lineage>
</organism>
<keyword id="KW-0997">Cell inner membrane</keyword>
<keyword id="KW-1003">Cell membrane</keyword>
<keyword id="KW-0472">Membrane</keyword>
<keyword id="KW-0520">NAD</keyword>
<keyword id="KW-0874">Quinone</keyword>
<keyword id="KW-1185">Reference proteome</keyword>
<keyword id="KW-1278">Translocase</keyword>
<keyword id="KW-0813">Transport</keyword>
<keyword id="KW-0830">Ubiquinone</keyword>
<name>NUOD1_BEII9</name>
<accession>B2IHW4</accession>
<reference key="1">
    <citation type="journal article" date="2010" name="J. Bacteriol.">
        <title>Complete genome sequence of Beijerinckia indica subsp. indica.</title>
        <authorList>
            <person name="Tamas I."/>
            <person name="Dedysh S.N."/>
            <person name="Liesack W."/>
            <person name="Stott M.B."/>
            <person name="Alam M."/>
            <person name="Murrell J.C."/>
            <person name="Dunfield P.F."/>
        </authorList>
    </citation>
    <scope>NUCLEOTIDE SEQUENCE [LARGE SCALE GENOMIC DNA]</scope>
    <source>
        <strain>ATCC 9039 / DSM 1715 / NCIMB 8712</strain>
    </source>
</reference>
<protein>
    <recommendedName>
        <fullName evidence="1">NADH-quinone oxidoreductase subunit D 1</fullName>
        <ecNumber evidence="1">7.1.1.-</ecNumber>
    </recommendedName>
    <alternativeName>
        <fullName evidence="1">NADH dehydrogenase I subunit D 1</fullName>
    </alternativeName>
    <alternativeName>
        <fullName evidence="1">NDH-1 subunit D 1</fullName>
    </alternativeName>
</protein>
<evidence type="ECO:0000255" key="1">
    <source>
        <dbReference type="HAMAP-Rule" id="MF_01358"/>
    </source>
</evidence>
<dbReference type="EC" id="7.1.1.-" evidence="1"/>
<dbReference type="EMBL" id="CP001016">
    <property type="protein sequence ID" value="ACB96007.1"/>
    <property type="molecule type" value="Genomic_DNA"/>
</dbReference>
<dbReference type="RefSeq" id="WP_012385360.1">
    <property type="nucleotide sequence ID" value="NC_010581.1"/>
</dbReference>
<dbReference type="SMR" id="B2IHW4"/>
<dbReference type="STRING" id="395963.Bind_2396"/>
<dbReference type="KEGG" id="bid:Bind_2396"/>
<dbReference type="eggNOG" id="COG0649">
    <property type="taxonomic scope" value="Bacteria"/>
</dbReference>
<dbReference type="HOGENOM" id="CLU_015134_1_1_5"/>
<dbReference type="OrthoDB" id="9801496at2"/>
<dbReference type="Proteomes" id="UP000001695">
    <property type="component" value="Chromosome"/>
</dbReference>
<dbReference type="GO" id="GO:0005886">
    <property type="term" value="C:plasma membrane"/>
    <property type="evidence" value="ECO:0007669"/>
    <property type="project" value="UniProtKB-SubCell"/>
</dbReference>
<dbReference type="GO" id="GO:0051287">
    <property type="term" value="F:NAD binding"/>
    <property type="evidence" value="ECO:0007669"/>
    <property type="project" value="InterPro"/>
</dbReference>
<dbReference type="GO" id="GO:0050136">
    <property type="term" value="F:NADH:ubiquinone reductase (non-electrogenic) activity"/>
    <property type="evidence" value="ECO:0007669"/>
    <property type="project" value="UniProtKB-UniRule"/>
</dbReference>
<dbReference type="GO" id="GO:0048038">
    <property type="term" value="F:quinone binding"/>
    <property type="evidence" value="ECO:0007669"/>
    <property type="project" value="UniProtKB-KW"/>
</dbReference>
<dbReference type="FunFam" id="1.10.645.10:FF:000005">
    <property type="entry name" value="NADH-quinone oxidoreductase subunit D"/>
    <property type="match status" value="1"/>
</dbReference>
<dbReference type="Gene3D" id="1.10.645.10">
    <property type="entry name" value="Cytochrome-c3 Hydrogenase, chain B"/>
    <property type="match status" value="1"/>
</dbReference>
<dbReference type="HAMAP" id="MF_01358">
    <property type="entry name" value="NDH1_NuoD"/>
    <property type="match status" value="1"/>
</dbReference>
<dbReference type="InterPro" id="IPR001135">
    <property type="entry name" value="NADH_Q_OxRdtase_suD"/>
</dbReference>
<dbReference type="InterPro" id="IPR014029">
    <property type="entry name" value="NADH_UbQ_OxRdtase_49kDa_CS"/>
</dbReference>
<dbReference type="InterPro" id="IPR022885">
    <property type="entry name" value="NDH1_su_D/H"/>
</dbReference>
<dbReference type="InterPro" id="IPR029014">
    <property type="entry name" value="NiFe-Hase_large"/>
</dbReference>
<dbReference type="NCBIfam" id="TIGR01962">
    <property type="entry name" value="NuoD"/>
    <property type="match status" value="1"/>
</dbReference>
<dbReference type="NCBIfam" id="NF004739">
    <property type="entry name" value="PRK06075.1"/>
    <property type="match status" value="1"/>
</dbReference>
<dbReference type="PANTHER" id="PTHR11993:SF10">
    <property type="entry name" value="NADH DEHYDROGENASE [UBIQUINONE] IRON-SULFUR PROTEIN 2, MITOCHONDRIAL"/>
    <property type="match status" value="1"/>
</dbReference>
<dbReference type="PANTHER" id="PTHR11993">
    <property type="entry name" value="NADH-UBIQUINONE OXIDOREDUCTASE 49 KDA SUBUNIT"/>
    <property type="match status" value="1"/>
</dbReference>
<dbReference type="Pfam" id="PF00346">
    <property type="entry name" value="Complex1_49kDa"/>
    <property type="match status" value="1"/>
</dbReference>
<dbReference type="SUPFAM" id="SSF56762">
    <property type="entry name" value="HydB/Nqo4-like"/>
    <property type="match status" value="1"/>
</dbReference>
<dbReference type="PROSITE" id="PS00535">
    <property type="entry name" value="COMPLEX1_49K"/>
    <property type="match status" value="1"/>
</dbReference>
<proteinExistence type="inferred from homology"/>
<sequence>MNDNPVRNFAINFGPQHPAAHGVLRLVLELDGEVVERVDPHIGLLHRGTEKLMEARTYLQNVPYFDRLDYVAPMNQEHAFCLAIEKLLGIEVPRRGQLLRVLWCEIGRILSHLLNVTTQAMDVGALTPPLWGFEEREKLMVFYERASGARMHANYFRPGGVHIDCPQQLIDDIGAWCDPFLKVCDDLNDLFIENRIFKQRNVDIGVISLEDCWRWGFSGVMVRGSGAAWDLRKAQPYECYEEMDFDIPVGRHGDNYDRQVIRMEEMRQSTKIMKQCVEKLSQASGKGPVATPQHKVVPPSRAEMKRSMEALIHHFKLYTEGFHVPAGEVYCGVEAPKGEFGVYLVSDGTDKPYRCKIRAPGFAHLSAMDFLCRKSMLADVSAILGSLDIVFGEVDR</sequence>
<feature type="chain" id="PRO_0000357775" description="NADH-quinone oxidoreductase subunit D 1">
    <location>
        <begin position="1"/>
        <end position="396"/>
    </location>
</feature>
<comment type="function">
    <text evidence="1">NDH-1 shuttles electrons from NADH, via FMN and iron-sulfur (Fe-S) centers, to quinones in the respiratory chain. The immediate electron acceptor for the enzyme in this species is believed to be ubiquinone. Couples the redox reaction to proton translocation (for every two electrons transferred, four hydrogen ions are translocated across the cytoplasmic membrane), and thus conserves the redox energy in a proton gradient.</text>
</comment>
<comment type="catalytic activity">
    <reaction evidence="1">
        <text>a quinone + NADH + 5 H(+)(in) = a quinol + NAD(+) + 4 H(+)(out)</text>
        <dbReference type="Rhea" id="RHEA:57888"/>
        <dbReference type="ChEBI" id="CHEBI:15378"/>
        <dbReference type="ChEBI" id="CHEBI:24646"/>
        <dbReference type="ChEBI" id="CHEBI:57540"/>
        <dbReference type="ChEBI" id="CHEBI:57945"/>
        <dbReference type="ChEBI" id="CHEBI:132124"/>
    </reaction>
</comment>
<comment type="subunit">
    <text evidence="1">NDH-1 is composed of 14 different subunits. Subunits NuoB, C, D, E, F, and G constitute the peripheral sector of the complex.</text>
</comment>
<comment type="subcellular location">
    <subcellularLocation>
        <location evidence="1">Cell inner membrane</location>
        <topology evidence="1">Peripheral membrane protein</topology>
        <orientation evidence="1">Cytoplasmic side</orientation>
    </subcellularLocation>
</comment>
<comment type="similarity">
    <text evidence="1">Belongs to the complex I 49 kDa subunit family.</text>
</comment>